<dbReference type="EC" id="3.2.1.113" evidence="3"/>
<dbReference type="EMBL" id="AB069647">
    <property type="protein sequence ID" value="BAC07247.1"/>
    <property type="molecule type" value="Genomic_DNA"/>
</dbReference>
<dbReference type="EMBL" id="BA000050">
    <property type="protein sequence ID" value="BAE57653.1"/>
    <property type="molecule type" value="Genomic_DNA"/>
</dbReference>
<dbReference type="RefSeq" id="XP_001819655.1">
    <property type="nucleotide sequence ID" value="XM_001819603.1"/>
</dbReference>
<dbReference type="SMR" id="Q2ULB2"/>
<dbReference type="STRING" id="510516.Q2ULB2"/>
<dbReference type="CAZy" id="GH47">
    <property type="family name" value="Glycoside Hydrolase Family 47"/>
</dbReference>
<dbReference type="GlyCosmos" id="Q2ULB2">
    <property type="glycosylation" value="5 sites, No reported glycans"/>
</dbReference>
<dbReference type="EnsemblFungi" id="BAE57653">
    <property type="protein sequence ID" value="BAE57653"/>
    <property type="gene ID" value="AO090003000476"/>
</dbReference>
<dbReference type="GeneID" id="5991638"/>
<dbReference type="KEGG" id="aor:AO090003000476"/>
<dbReference type="VEuPathDB" id="FungiDB:AO090003000476"/>
<dbReference type="HOGENOM" id="CLU_003818_0_2_1"/>
<dbReference type="OMA" id="PESFGWD"/>
<dbReference type="OrthoDB" id="25603at5052"/>
<dbReference type="UniPathway" id="UPA00378"/>
<dbReference type="Proteomes" id="UP000006564">
    <property type="component" value="Chromosome 2"/>
</dbReference>
<dbReference type="GO" id="GO:0060205">
    <property type="term" value="C:cytoplasmic vesicle lumen"/>
    <property type="evidence" value="ECO:0007669"/>
    <property type="project" value="UniProtKB-SubCell"/>
</dbReference>
<dbReference type="GO" id="GO:0005783">
    <property type="term" value="C:endoplasmic reticulum"/>
    <property type="evidence" value="ECO:0007669"/>
    <property type="project" value="TreeGrafter"/>
</dbReference>
<dbReference type="GO" id="GO:0016020">
    <property type="term" value="C:membrane"/>
    <property type="evidence" value="ECO:0007669"/>
    <property type="project" value="InterPro"/>
</dbReference>
<dbReference type="GO" id="GO:0005509">
    <property type="term" value="F:calcium ion binding"/>
    <property type="evidence" value="ECO:0007669"/>
    <property type="project" value="InterPro"/>
</dbReference>
<dbReference type="GO" id="GO:0004571">
    <property type="term" value="F:mannosyl-oligosaccharide 1,2-alpha-mannosidase activity"/>
    <property type="evidence" value="ECO:0007669"/>
    <property type="project" value="UniProtKB-EC"/>
</dbReference>
<dbReference type="GO" id="GO:0005975">
    <property type="term" value="P:carbohydrate metabolic process"/>
    <property type="evidence" value="ECO:0007669"/>
    <property type="project" value="InterPro"/>
</dbReference>
<dbReference type="GO" id="GO:0036503">
    <property type="term" value="P:ERAD pathway"/>
    <property type="evidence" value="ECO:0007669"/>
    <property type="project" value="UniProtKB-ARBA"/>
</dbReference>
<dbReference type="GO" id="GO:0006486">
    <property type="term" value="P:protein glycosylation"/>
    <property type="evidence" value="ECO:0007669"/>
    <property type="project" value="UniProtKB-UniPathway"/>
</dbReference>
<dbReference type="FunFam" id="1.50.10.10:FF:000047">
    <property type="entry name" value="Mannosyl-oligosaccharide alpha-1,2-mannosidase"/>
    <property type="match status" value="1"/>
</dbReference>
<dbReference type="Gene3D" id="1.50.10.10">
    <property type="match status" value="1"/>
</dbReference>
<dbReference type="InterPro" id="IPR012341">
    <property type="entry name" value="6hp_glycosidase-like_sf"/>
</dbReference>
<dbReference type="InterPro" id="IPR001382">
    <property type="entry name" value="Glyco_hydro_47"/>
</dbReference>
<dbReference type="InterPro" id="IPR050749">
    <property type="entry name" value="Glycosyl_Hydrolase_47"/>
</dbReference>
<dbReference type="InterPro" id="IPR036026">
    <property type="entry name" value="Seven-hairpin_glycosidases"/>
</dbReference>
<dbReference type="PANTHER" id="PTHR11742:SF101">
    <property type="entry name" value="MANNOSYL-OLIGOSACCHARIDE ALPHA-1,2-MANNOSIDASE 1B"/>
    <property type="match status" value="1"/>
</dbReference>
<dbReference type="PANTHER" id="PTHR11742">
    <property type="entry name" value="MANNOSYL-OLIGOSACCHARIDE ALPHA-1,2-MANNOSIDASE-RELATED"/>
    <property type="match status" value="1"/>
</dbReference>
<dbReference type="Pfam" id="PF01532">
    <property type="entry name" value="Glyco_hydro_47"/>
    <property type="match status" value="1"/>
</dbReference>
<dbReference type="PRINTS" id="PR00747">
    <property type="entry name" value="GLYHDRLASE47"/>
</dbReference>
<dbReference type="SUPFAM" id="SSF48225">
    <property type="entry name" value="Seven-hairpin glycosidases"/>
    <property type="match status" value="1"/>
</dbReference>
<name>MNS1B_ASPOR</name>
<protein>
    <recommendedName>
        <fullName>Mannosyl-oligosaccharide alpha-1,2-mannosidase 1B</fullName>
        <ecNumber evidence="3">3.2.1.113</ecNumber>
    </recommendedName>
    <alternativeName>
        <fullName>Class I alpha-mannosidase 1B</fullName>
    </alternativeName>
    <alternativeName>
        <fullName>Man(9)-alpha-mannosidase 1B</fullName>
    </alternativeName>
</protein>
<sequence length="510" mass="56631">MHFSSLSLPLTALSLVTPSLAYPQFKFEQRVARSNSSESRANAVKEAFVHAWDGYMQYAYPHDELHPISNGVGDSRNGWGASAVDALSTAVIMGNETIVNQILDHIATIDYSKTDDQVSLFETTIRYLGGMLSGYDLLKGPASNLVKDQAKVKTLLDQSQNLADVLKFAFDTPSGIPYNNINITSHGNDGATTNGLAVTGTLVLEWTRLSDLTGDTEYAQLSQKAEDYLLNPSPKSAEPFEGLVGSHINISNGAFADGQVSWNGGDDSFYEYLIKMYVYDPKRFSTYGDRWVKAAESSIKHLASHPEKRPDLTFLASYNDGQYGLSSQHLTCFDGGSFLLGGTVLDRDDFIQFGLDLVKGCHETYNQTLTGIGPESFGWDPKNVPSDQKELYERAGFYISSGAYILRPEVIESFYYAWRITGQEIYREWVWNAFVNINKYCRTDSGFAGLTNVNAANGGGRYDNQESFLFAEVLKYVYLTFAPDNEWQVQRGKGNKFVYNTEAHPVRVAA</sequence>
<keyword id="KW-0119">Carbohydrate metabolism</keyword>
<keyword id="KW-0968">Cytoplasmic vesicle</keyword>
<keyword id="KW-1015">Disulfide bond</keyword>
<keyword id="KW-0325">Glycoprotein</keyword>
<keyword id="KW-0326">Glycosidase</keyword>
<keyword id="KW-0378">Hydrolase</keyword>
<keyword id="KW-0479">Metal-binding</keyword>
<keyword id="KW-1185">Reference proteome</keyword>
<keyword id="KW-0732">Signal</keyword>
<gene>
    <name type="primary">mns1B</name>
    <name type="synonym">manA</name>
    <name type="synonym">msdS</name>
    <name type="ORF">AO090003000476</name>
</gene>
<proteinExistence type="evidence at protein level"/>
<reference key="1">
    <citation type="journal article" date="2006" name="Biosci. Biotechnol. Biochem.">
        <title>Cloning and expression of 1,2-alpha-mannosidase gene (fmanIB) from filamentous fungus Aspergillus oryzae: in vivo visualization of the FmanIBp-GFP fusion protein.</title>
        <authorList>
            <person name="Akao T."/>
            <person name="Yamaguchi M."/>
            <person name="Yahara A."/>
            <person name="Yoshiuchi K."/>
            <person name="Fujita H."/>
            <person name="Yamada O."/>
            <person name="Akita O."/>
            <person name="Ohmachi T."/>
            <person name="Asada Y."/>
            <person name="Yoshida T."/>
        </authorList>
    </citation>
    <scope>NUCLEOTIDE SEQUENCE [GENOMIC DNA]</scope>
    <scope>SUBCELLULAR LOCATION</scope>
    <scope>GLYCOSYLATION</scope>
    <scope>FUNCTION</scope>
    <scope>BIOPHYSICOCHEMICAL PROPERTIES</scope>
    <scope>COFACTOR</scope>
    <source>
        <strain>ATCC 42149 / RIB 40</strain>
    </source>
</reference>
<reference key="2">
    <citation type="journal article" date="2005" name="Nature">
        <title>Genome sequencing and analysis of Aspergillus oryzae.</title>
        <authorList>
            <person name="Machida M."/>
            <person name="Asai K."/>
            <person name="Sano M."/>
            <person name="Tanaka T."/>
            <person name="Kumagai T."/>
            <person name="Terai G."/>
            <person name="Kusumoto K."/>
            <person name="Arima T."/>
            <person name="Akita O."/>
            <person name="Kashiwagi Y."/>
            <person name="Abe K."/>
            <person name="Gomi K."/>
            <person name="Horiuchi H."/>
            <person name="Kitamoto K."/>
            <person name="Kobayashi T."/>
            <person name="Takeuchi M."/>
            <person name="Denning D.W."/>
            <person name="Galagan J.E."/>
            <person name="Nierman W.C."/>
            <person name="Yu J."/>
            <person name="Archer D.B."/>
            <person name="Bennett J.W."/>
            <person name="Bhatnagar D."/>
            <person name="Cleveland T.E."/>
            <person name="Fedorova N.D."/>
            <person name="Gotoh O."/>
            <person name="Horikawa H."/>
            <person name="Hosoyama A."/>
            <person name="Ichinomiya M."/>
            <person name="Igarashi R."/>
            <person name="Iwashita K."/>
            <person name="Juvvadi P.R."/>
            <person name="Kato M."/>
            <person name="Kato Y."/>
            <person name="Kin T."/>
            <person name="Kokubun A."/>
            <person name="Maeda H."/>
            <person name="Maeyama N."/>
            <person name="Maruyama J."/>
            <person name="Nagasaki H."/>
            <person name="Nakajima T."/>
            <person name="Oda K."/>
            <person name="Okada K."/>
            <person name="Paulsen I."/>
            <person name="Sakamoto K."/>
            <person name="Sawano T."/>
            <person name="Takahashi M."/>
            <person name="Takase K."/>
            <person name="Terabayashi Y."/>
            <person name="Wortman J.R."/>
            <person name="Yamada O."/>
            <person name="Yamagata Y."/>
            <person name="Anazawa H."/>
            <person name="Hata Y."/>
            <person name="Koide Y."/>
            <person name="Komori T."/>
            <person name="Koyama Y."/>
            <person name="Minetoki T."/>
            <person name="Suharnan S."/>
            <person name="Tanaka A."/>
            <person name="Isono K."/>
            <person name="Kuhara S."/>
            <person name="Ogasawara N."/>
            <person name="Kikuchi H."/>
        </authorList>
    </citation>
    <scope>NUCLEOTIDE SEQUENCE [LARGE SCALE GENOMIC DNA]</scope>
    <source>
        <strain>ATCC 42149 / RIB 40</strain>
    </source>
</reference>
<comment type="function">
    <text evidence="5">Involved in the maturation of Asn-linked oligosaccharides. Progressively trims alpha-1,2-linked mannose residues from Man(9)GlcNAc(2) to produce Man(5)GlcNAc(2).</text>
</comment>
<comment type="catalytic activity">
    <reaction evidence="3">
        <text>N(4)-(alpha-D-Man-(1-&gt;2)-alpha-D-Man-(1-&gt;2)-alpha-D-Man-(1-&gt;3)-[alpha-D-Man-(1-&gt;2)-alpha-D-Man-(1-&gt;3)-[alpha-D-Man-(1-&gt;2)-alpha-D-Man-(1-&gt;6)]-alpha-D-Man-(1-&gt;6)]-beta-D-Man-(1-&gt;4)-beta-D-GlcNAc-(1-&gt;4)-beta-D-GlcNAc)-L-asparaginyl-[protein] (N-glucan mannose isomer 9A1,2,3B1,2,3) + 4 H2O = N(4)-(alpha-D-Man-(1-&gt;3)-[alpha-D-Man-(1-&gt;3)-[alpha-D-Man-(1-&gt;6)]-alpha-D-Man-(1-&gt;6)]-beta-D-Man-(1-&gt;4)-beta-D-GlcNAc-(1-&gt;4)-beta-D-GlcNAc)-L-asparaginyl-[protein] (N-glucan mannose isomer 5A1,2) + 4 beta-D-mannose</text>
        <dbReference type="Rhea" id="RHEA:56008"/>
        <dbReference type="Rhea" id="RHEA-COMP:14356"/>
        <dbReference type="Rhea" id="RHEA-COMP:14367"/>
        <dbReference type="ChEBI" id="CHEBI:15377"/>
        <dbReference type="ChEBI" id="CHEBI:28563"/>
        <dbReference type="ChEBI" id="CHEBI:59087"/>
        <dbReference type="ChEBI" id="CHEBI:139493"/>
        <dbReference type="EC" id="3.2.1.113"/>
    </reaction>
</comment>
<comment type="catalytic activity">
    <reaction evidence="3">
        <text>N(4)-(alpha-D-Man-(1-&gt;2)-alpha-D-Man-(1-&gt;2)-alpha-D-Man-(1-&gt;3)-[alpha-D-Man-(1-&gt;3)-[alpha-D-Man-(1-&gt;2)-alpha-D-Man-(1-&gt;6)]-alpha-D-Man-(1-&gt;6)]-beta-D-Man-(1-&gt;4)-beta-D-GlcNAc-(1-&gt;4)-beta-D-GlcNAc)-L-asparaginyl-[protein] (N-glucan mannose isomer 8A1,2,3B1,3) + 3 H2O = N(4)-(alpha-D-Man-(1-&gt;3)-[alpha-D-Man-(1-&gt;3)-[alpha-D-Man-(1-&gt;6)]-alpha-D-Man-(1-&gt;6)]-beta-D-Man-(1-&gt;4)-beta-D-GlcNAc-(1-&gt;4)-beta-D-GlcNAc)-L-asparaginyl-[protein] (N-glucan mannose isomer 5A1,2) + 3 beta-D-mannose</text>
        <dbReference type="Rhea" id="RHEA:56028"/>
        <dbReference type="Rhea" id="RHEA-COMP:14358"/>
        <dbReference type="Rhea" id="RHEA-COMP:14367"/>
        <dbReference type="ChEBI" id="CHEBI:15377"/>
        <dbReference type="ChEBI" id="CHEBI:28563"/>
        <dbReference type="ChEBI" id="CHEBI:59087"/>
        <dbReference type="ChEBI" id="CHEBI:60628"/>
        <dbReference type="EC" id="3.2.1.113"/>
    </reaction>
</comment>
<comment type="cofactor">
    <cofactor evidence="5">
        <name>Ca(2+)</name>
        <dbReference type="ChEBI" id="CHEBI:29108"/>
    </cofactor>
    <cofactor evidence="5">
        <name>Mg(2+)</name>
        <dbReference type="ChEBI" id="CHEBI:18420"/>
    </cofactor>
    <text evidence="5">Ca(2+). Can also use Mg(2+), but with lower efficiency.</text>
</comment>
<comment type="biophysicochemical properties">
    <phDependence>
        <text evidence="5">Optimum pH is 5.5. Activity is above 50 percent between pH 4.5 and 6.5.</text>
    </phDependence>
    <temperatureDependence>
        <text evidence="5">Optimum temperature is 45 degrees Celsius. Activity remains at about 60 percent and 14 percent at 60 degrees Celsius and 65 degrees Celsius respectively.</text>
    </temperatureDependence>
</comment>
<comment type="pathway">
    <text evidence="3">Protein modification; protein glycosylation.</text>
</comment>
<comment type="subunit">
    <text evidence="1">Monomer.</text>
</comment>
<comment type="subcellular location">
    <subcellularLocation>
        <location evidence="5">Cytoplasmic vesicle lumen</location>
    </subcellularLocation>
</comment>
<comment type="similarity">
    <text evidence="6">Belongs to the glycosyl hydrolase 47 family.</text>
</comment>
<evidence type="ECO:0000250" key="1"/>
<evidence type="ECO:0000250" key="2">
    <source>
        <dbReference type="UniProtKB" id="P31723"/>
    </source>
</evidence>
<evidence type="ECO:0000250" key="3">
    <source>
        <dbReference type="UniProtKB" id="P32906"/>
    </source>
</evidence>
<evidence type="ECO:0000255" key="4"/>
<evidence type="ECO:0000269" key="5">
    <source>
    </source>
</evidence>
<evidence type="ECO:0000305" key="6"/>
<organism>
    <name type="scientific">Aspergillus oryzae (strain ATCC 42149 / RIB 40)</name>
    <name type="common">Yellow koji mold</name>
    <dbReference type="NCBI Taxonomy" id="510516"/>
    <lineage>
        <taxon>Eukaryota</taxon>
        <taxon>Fungi</taxon>
        <taxon>Dikarya</taxon>
        <taxon>Ascomycota</taxon>
        <taxon>Pezizomycotina</taxon>
        <taxon>Eurotiomycetes</taxon>
        <taxon>Eurotiomycetidae</taxon>
        <taxon>Eurotiales</taxon>
        <taxon>Aspergillaceae</taxon>
        <taxon>Aspergillus</taxon>
        <taxon>Aspergillus subgen. Circumdati</taxon>
    </lineage>
</organism>
<feature type="signal peptide" evidence="4">
    <location>
        <begin position="1"/>
        <end position="21"/>
    </location>
</feature>
<feature type="chain" id="PRO_0000394820" description="Mannosyl-oligosaccharide alpha-1,2-mannosidase 1B">
    <location>
        <begin position="22"/>
        <end position="510"/>
    </location>
</feature>
<feature type="active site" description="Proton donor" evidence="2">
    <location>
        <position position="375"/>
    </location>
</feature>
<feature type="binding site" evidence="3">
    <location>
        <position position="501"/>
    </location>
    <ligand>
        <name>Ca(2+)</name>
        <dbReference type="ChEBI" id="CHEBI:29108"/>
    </ligand>
</feature>
<feature type="glycosylation site" description="N-linked (GlcNAc...) asparagine" evidence="4">
    <location>
        <position position="35"/>
    </location>
</feature>
<feature type="glycosylation site" description="N-linked (GlcNAc...) asparagine" evidence="4">
    <location>
        <position position="95"/>
    </location>
</feature>
<feature type="glycosylation site" description="N-linked (GlcNAc...) asparagine" evidence="4">
    <location>
        <position position="182"/>
    </location>
</feature>
<feature type="glycosylation site" description="N-linked (GlcNAc...) asparagine" evidence="4">
    <location>
        <position position="249"/>
    </location>
</feature>
<feature type="glycosylation site" description="N-linked (GlcNAc...) asparagine" evidence="4">
    <location>
        <position position="366"/>
    </location>
</feature>
<feature type="disulfide bond" evidence="3">
    <location>
        <begin position="332"/>
        <end position="361"/>
    </location>
</feature>
<accession>Q2ULB2</accession>